<keyword id="KW-0050">Antiport</keyword>
<keyword id="KW-0997">Cell inner membrane</keyword>
<keyword id="KW-1003">Cell membrane</keyword>
<keyword id="KW-0406">Ion transport</keyword>
<keyword id="KW-0472">Membrane</keyword>
<keyword id="KW-0630">Potassium</keyword>
<keyword id="KW-0633">Potassium transport</keyword>
<keyword id="KW-1185">Reference proteome</keyword>
<keyword id="KW-0812">Transmembrane</keyword>
<keyword id="KW-1133">Transmembrane helix</keyword>
<keyword id="KW-0813">Transport</keyword>
<sequence>MDATTIISLFILGSILVTSSILLSSFSSRLGIPILVIFLAIGMLAGVDGVGGIPFDNYPFAYMVSNLALAIILLDGGMRTQASSFRVALGPALSLATLGVLITSGLTGMMAAWLFNLDLIEGLLIGAIVGSTDAAAVFSLLGGKGLNERVGSTLEIESGSNDPMAVFLTITLIAMIQQHESSVSWMFVVDILQQFGLGIVIGLGGGYLLLQMINRIALPAGLYPLLALSGGILIFALTTALEGSGILAVYLCGFLLGNRPIRNRYGILQNFDGLAWLAQIAMFLVLGLLVNPSDLLPIAIPALILSAWMIFFARPLSVFAGLLPFRGFNLRERVFISWVGLRGAVPIILAVFPMMAGLENARLFFNVAFFVVLVSLLLQGTSLSWAAKKAKVVVPPVGRPVSRVGLDIHPENPWEQFVYQLSADKWCVGAALRDLHMPKETRIAALFRDNQLLHPTGSTRLREGDVLCVIGRERDLPALGKLFSQSPPVALDQRFFGDFILEASAKYADVALIYGLEDGREYRDKQQTLGEIVQQLLGAAPVVGDQVEFAGMIWTVAEKEDNEVLKIGVRVAEEEAES</sequence>
<dbReference type="EMBL" id="CU928145">
    <property type="protein sequence ID" value="CAU97145.1"/>
    <property type="molecule type" value="Genomic_DNA"/>
</dbReference>
<dbReference type="RefSeq" id="WP_000340206.1">
    <property type="nucleotide sequence ID" value="NZ_CP028304.1"/>
</dbReference>
<dbReference type="SMR" id="B7LGV1"/>
<dbReference type="KEGG" id="eck:EC55989_1287"/>
<dbReference type="HOGENOM" id="CLU_005912_9_2_6"/>
<dbReference type="Proteomes" id="UP000000746">
    <property type="component" value="Chromosome"/>
</dbReference>
<dbReference type="GO" id="GO:0005886">
    <property type="term" value="C:plasma membrane"/>
    <property type="evidence" value="ECO:0007669"/>
    <property type="project" value="UniProtKB-SubCell"/>
</dbReference>
<dbReference type="GO" id="GO:0050660">
    <property type="term" value="F:flavin adenine dinucleotide binding"/>
    <property type="evidence" value="ECO:0007669"/>
    <property type="project" value="InterPro"/>
</dbReference>
<dbReference type="GO" id="GO:0015386">
    <property type="term" value="F:potassium:proton antiporter activity"/>
    <property type="evidence" value="ECO:0007669"/>
    <property type="project" value="UniProtKB-UniRule"/>
</dbReference>
<dbReference type="GO" id="GO:0006884">
    <property type="term" value="P:cell volume homeostasis"/>
    <property type="evidence" value="ECO:0007669"/>
    <property type="project" value="InterPro"/>
</dbReference>
<dbReference type="FunFam" id="1.20.1530.20:FF:000002">
    <property type="entry name" value="K(+)/H(+) antiporter NhaP2"/>
    <property type="match status" value="1"/>
</dbReference>
<dbReference type="FunFam" id="3.30.465.10:FF:000009">
    <property type="entry name" value="K(+)/H(+) antiporter NhaP2"/>
    <property type="match status" value="1"/>
</dbReference>
<dbReference type="FunFam" id="3.30.70.1450:FF:000007">
    <property type="entry name" value="K(+)/H(+) antiporter NhaP2"/>
    <property type="match status" value="1"/>
</dbReference>
<dbReference type="Gene3D" id="1.20.1530.20">
    <property type="match status" value="1"/>
</dbReference>
<dbReference type="Gene3D" id="3.30.465.10">
    <property type="match status" value="1"/>
</dbReference>
<dbReference type="Gene3D" id="3.30.70.1450">
    <property type="entry name" value="Regulator of K+ conductance, C-terminal domain"/>
    <property type="match status" value="1"/>
</dbReference>
<dbReference type="HAMAP" id="MF_01075">
    <property type="entry name" value="NhaP2"/>
    <property type="match status" value="1"/>
</dbReference>
<dbReference type="InterPro" id="IPR006153">
    <property type="entry name" value="Cation/H_exchanger_TM"/>
</dbReference>
<dbReference type="InterPro" id="IPR036318">
    <property type="entry name" value="FAD-bd_PCMH-like_sf"/>
</dbReference>
<dbReference type="InterPro" id="IPR016169">
    <property type="entry name" value="FAD-bd_PCMH_sub2"/>
</dbReference>
<dbReference type="InterPro" id="IPR038770">
    <property type="entry name" value="Na+/solute_symporter_sf"/>
</dbReference>
<dbReference type="InterPro" id="IPR023729">
    <property type="entry name" value="NhaP2"/>
</dbReference>
<dbReference type="InterPro" id="IPR006037">
    <property type="entry name" value="RCK_C"/>
</dbReference>
<dbReference type="InterPro" id="IPR036721">
    <property type="entry name" value="RCK_C_sf"/>
</dbReference>
<dbReference type="InterPro" id="IPR005170">
    <property type="entry name" value="Transptr-assoc_dom"/>
</dbReference>
<dbReference type="NCBIfam" id="NF003714">
    <property type="entry name" value="PRK05326.1-1"/>
    <property type="match status" value="1"/>
</dbReference>
<dbReference type="NCBIfam" id="NF003715">
    <property type="entry name" value="PRK05326.1-2"/>
    <property type="match status" value="1"/>
</dbReference>
<dbReference type="NCBIfam" id="NF003716">
    <property type="entry name" value="PRK05326.1-3"/>
    <property type="match status" value="1"/>
</dbReference>
<dbReference type="PANTHER" id="PTHR32507:SF7">
    <property type="entry name" value="K(+)_H(+) ANTIPORTER NHAP2"/>
    <property type="match status" value="1"/>
</dbReference>
<dbReference type="PANTHER" id="PTHR32507">
    <property type="entry name" value="NA(+)/H(+) ANTIPORTER 1"/>
    <property type="match status" value="1"/>
</dbReference>
<dbReference type="Pfam" id="PF03471">
    <property type="entry name" value="CorC_HlyC"/>
    <property type="match status" value="1"/>
</dbReference>
<dbReference type="Pfam" id="PF00999">
    <property type="entry name" value="Na_H_Exchanger"/>
    <property type="match status" value="1"/>
</dbReference>
<dbReference type="Pfam" id="PF02080">
    <property type="entry name" value="TrkA_C"/>
    <property type="match status" value="1"/>
</dbReference>
<dbReference type="SMART" id="SM01091">
    <property type="entry name" value="CorC_HlyC"/>
    <property type="match status" value="1"/>
</dbReference>
<dbReference type="SUPFAM" id="SSF56176">
    <property type="entry name" value="FAD-binding/transporter-associated domain-like"/>
    <property type="match status" value="1"/>
</dbReference>
<dbReference type="SUPFAM" id="SSF116726">
    <property type="entry name" value="TrkA C-terminal domain-like"/>
    <property type="match status" value="1"/>
</dbReference>
<dbReference type="PROSITE" id="PS51202">
    <property type="entry name" value="RCK_C"/>
    <property type="match status" value="1"/>
</dbReference>
<gene>
    <name evidence="1" type="primary">nhaP2</name>
    <name type="synonym">cvrA</name>
    <name type="ordered locus">EC55989_1287</name>
</gene>
<feature type="chain" id="PRO_1000149772" description="K(+)/H(+) antiporter NhaP2">
    <location>
        <begin position="1"/>
        <end position="578"/>
    </location>
</feature>
<feature type="transmembrane region" description="Helical" evidence="1">
    <location>
        <begin position="6"/>
        <end position="26"/>
    </location>
</feature>
<feature type="transmembrane region" description="Helical" evidence="1">
    <location>
        <begin position="30"/>
        <end position="50"/>
    </location>
</feature>
<feature type="transmembrane region" description="Helical" evidence="1">
    <location>
        <begin position="58"/>
        <end position="78"/>
    </location>
</feature>
<feature type="transmembrane region" description="Helical" evidence="1">
    <location>
        <begin position="87"/>
        <end position="107"/>
    </location>
</feature>
<feature type="transmembrane region" description="Helical" evidence="1">
    <location>
        <begin position="109"/>
        <end position="129"/>
    </location>
</feature>
<feature type="transmembrane region" description="Helical" evidence="1">
    <location>
        <begin position="156"/>
        <end position="176"/>
    </location>
</feature>
<feature type="transmembrane region" description="Helical" evidence="1">
    <location>
        <begin position="185"/>
        <end position="205"/>
    </location>
</feature>
<feature type="transmembrane region" description="Helical" evidence="1">
    <location>
        <begin position="216"/>
        <end position="236"/>
    </location>
</feature>
<feature type="transmembrane region" description="Helical" evidence="1">
    <location>
        <begin position="237"/>
        <end position="257"/>
    </location>
</feature>
<feature type="transmembrane region" description="Helical" evidence="1">
    <location>
        <begin position="270"/>
        <end position="290"/>
    </location>
</feature>
<feature type="transmembrane region" description="Helical" evidence="1">
    <location>
        <begin position="293"/>
        <end position="313"/>
    </location>
</feature>
<feature type="transmembrane region" description="Helical" evidence="1">
    <location>
        <begin position="334"/>
        <end position="354"/>
    </location>
</feature>
<feature type="transmembrane region" description="Helical" evidence="1">
    <location>
        <begin position="363"/>
        <end position="383"/>
    </location>
</feature>
<feature type="domain" description="RCK C-terminal" evidence="1">
    <location>
        <begin position="403"/>
        <end position="485"/>
    </location>
</feature>
<evidence type="ECO:0000255" key="1">
    <source>
        <dbReference type="HAMAP-Rule" id="MF_01075"/>
    </source>
</evidence>
<organism>
    <name type="scientific">Escherichia coli (strain 55989 / EAEC)</name>
    <dbReference type="NCBI Taxonomy" id="585055"/>
    <lineage>
        <taxon>Bacteria</taxon>
        <taxon>Pseudomonadati</taxon>
        <taxon>Pseudomonadota</taxon>
        <taxon>Gammaproteobacteria</taxon>
        <taxon>Enterobacterales</taxon>
        <taxon>Enterobacteriaceae</taxon>
        <taxon>Escherichia</taxon>
    </lineage>
</organism>
<name>NHAP2_ECO55</name>
<accession>B7LGV1</accession>
<reference key="1">
    <citation type="journal article" date="2009" name="PLoS Genet.">
        <title>Organised genome dynamics in the Escherichia coli species results in highly diverse adaptive paths.</title>
        <authorList>
            <person name="Touchon M."/>
            <person name="Hoede C."/>
            <person name="Tenaillon O."/>
            <person name="Barbe V."/>
            <person name="Baeriswyl S."/>
            <person name="Bidet P."/>
            <person name="Bingen E."/>
            <person name="Bonacorsi S."/>
            <person name="Bouchier C."/>
            <person name="Bouvet O."/>
            <person name="Calteau A."/>
            <person name="Chiapello H."/>
            <person name="Clermont O."/>
            <person name="Cruveiller S."/>
            <person name="Danchin A."/>
            <person name="Diard M."/>
            <person name="Dossat C."/>
            <person name="Karoui M.E."/>
            <person name="Frapy E."/>
            <person name="Garry L."/>
            <person name="Ghigo J.M."/>
            <person name="Gilles A.M."/>
            <person name="Johnson J."/>
            <person name="Le Bouguenec C."/>
            <person name="Lescat M."/>
            <person name="Mangenot S."/>
            <person name="Martinez-Jehanne V."/>
            <person name="Matic I."/>
            <person name="Nassif X."/>
            <person name="Oztas S."/>
            <person name="Petit M.A."/>
            <person name="Pichon C."/>
            <person name="Rouy Z."/>
            <person name="Ruf C.S."/>
            <person name="Schneider D."/>
            <person name="Tourret J."/>
            <person name="Vacherie B."/>
            <person name="Vallenet D."/>
            <person name="Medigue C."/>
            <person name="Rocha E.P.C."/>
            <person name="Denamur E."/>
        </authorList>
    </citation>
    <scope>NUCLEOTIDE SEQUENCE [LARGE SCALE GENOMIC DNA]</scope>
    <source>
        <strain>55989 / EAEC</strain>
    </source>
</reference>
<proteinExistence type="inferred from homology"/>
<protein>
    <recommendedName>
        <fullName evidence="1">K(+)/H(+) antiporter NhaP2</fullName>
    </recommendedName>
    <alternativeName>
        <fullName evidence="1">Potassium/proton antiporter NhaP2</fullName>
    </alternativeName>
</protein>
<comment type="function">
    <text evidence="1">K(+)/H(+) antiporter that extrudes potassium in exchange for external protons and maintains the internal concentration of potassium under toxic levels.</text>
</comment>
<comment type="catalytic activity">
    <reaction evidence="1">
        <text>K(+)(in) + H(+)(out) = K(+)(out) + H(+)(in)</text>
        <dbReference type="Rhea" id="RHEA:29467"/>
        <dbReference type="ChEBI" id="CHEBI:15378"/>
        <dbReference type="ChEBI" id="CHEBI:29103"/>
    </reaction>
    <physiologicalReaction direction="left-to-right" evidence="1">
        <dbReference type="Rhea" id="RHEA:29468"/>
    </physiologicalReaction>
</comment>
<comment type="subcellular location">
    <subcellularLocation>
        <location evidence="1">Cell inner membrane</location>
        <topology evidence="1">Multi-pass membrane protein</topology>
    </subcellularLocation>
</comment>
<comment type="similarity">
    <text evidence="1">Belongs to the monovalent cation:proton antiporter 1 (CPA1) transporter (TC 2.A.36) family. NhaP2 subfamily.</text>
</comment>